<feature type="chain" id="PRO_0000292040" description="POM121-like protein 2">
    <location>
        <begin position="1"/>
        <end position="972"/>
    </location>
</feature>
<feature type="region of interest" description="Disordered" evidence="1">
    <location>
        <begin position="1"/>
        <end position="67"/>
    </location>
</feature>
<feature type="region of interest" description="Disordered" evidence="1">
    <location>
        <begin position="281"/>
        <end position="302"/>
    </location>
</feature>
<feature type="region of interest" description="Disordered" evidence="1">
    <location>
        <begin position="328"/>
        <end position="359"/>
    </location>
</feature>
<feature type="region of interest" description="Disordered" evidence="1">
    <location>
        <begin position="406"/>
        <end position="431"/>
    </location>
</feature>
<feature type="region of interest" description="Disordered" evidence="1">
    <location>
        <begin position="676"/>
        <end position="726"/>
    </location>
</feature>
<feature type="region of interest" description="Disordered" evidence="1">
    <location>
        <begin position="953"/>
        <end position="972"/>
    </location>
</feature>
<feature type="compositionally biased region" description="Basic residues" evidence="1">
    <location>
        <begin position="40"/>
        <end position="57"/>
    </location>
</feature>
<feature type="compositionally biased region" description="Polar residues" evidence="1">
    <location>
        <begin position="287"/>
        <end position="302"/>
    </location>
</feature>
<feature type="compositionally biased region" description="Polar residues" evidence="1">
    <location>
        <begin position="339"/>
        <end position="352"/>
    </location>
</feature>
<feature type="compositionally biased region" description="Low complexity" evidence="1">
    <location>
        <begin position="413"/>
        <end position="431"/>
    </location>
</feature>
<feature type="compositionally biased region" description="Polar residues" evidence="1">
    <location>
        <begin position="677"/>
        <end position="696"/>
    </location>
</feature>
<feature type="compositionally biased region" description="Low complexity" evidence="1">
    <location>
        <begin position="697"/>
        <end position="706"/>
    </location>
</feature>
<comment type="similarity">
    <text evidence="2">Belongs to the POM121 family.</text>
</comment>
<gene>
    <name type="primary">Pom121l2</name>
    <name type="synonym">Gm24</name>
</gene>
<keyword id="KW-1185">Reference proteome</keyword>
<organism>
    <name type="scientific">Mus musculus</name>
    <name type="common">Mouse</name>
    <dbReference type="NCBI Taxonomy" id="10090"/>
    <lineage>
        <taxon>Eukaryota</taxon>
        <taxon>Metazoa</taxon>
        <taxon>Chordata</taxon>
        <taxon>Craniata</taxon>
        <taxon>Vertebrata</taxon>
        <taxon>Euteleostomi</taxon>
        <taxon>Mammalia</taxon>
        <taxon>Eutheria</taxon>
        <taxon>Euarchontoglires</taxon>
        <taxon>Glires</taxon>
        <taxon>Rodentia</taxon>
        <taxon>Myomorpha</taxon>
        <taxon>Muroidea</taxon>
        <taxon>Muridae</taxon>
        <taxon>Murinae</taxon>
        <taxon>Mus</taxon>
        <taxon>Mus</taxon>
    </lineage>
</organism>
<accession>Q5SW25</accession>
<reference key="1">
    <citation type="journal article" date="2009" name="PLoS Biol.">
        <title>Lineage-specific biology revealed by a finished genome assembly of the mouse.</title>
        <authorList>
            <person name="Church D.M."/>
            <person name="Goodstadt L."/>
            <person name="Hillier L.W."/>
            <person name="Zody M.C."/>
            <person name="Goldstein S."/>
            <person name="She X."/>
            <person name="Bult C.J."/>
            <person name="Agarwala R."/>
            <person name="Cherry J.L."/>
            <person name="DiCuccio M."/>
            <person name="Hlavina W."/>
            <person name="Kapustin Y."/>
            <person name="Meric P."/>
            <person name="Maglott D."/>
            <person name="Birtle Z."/>
            <person name="Marques A.C."/>
            <person name="Graves T."/>
            <person name="Zhou S."/>
            <person name="Teague B."/>
            <person name="Potamousis K."/>
            <person name="Churas C."/>
            <person name="Place M."/>
            <person name="Herschleb J."/>
            <person name="Runnheim R."/>
            <person name="Forrest D."/>
            <person name="Amos-Landgraf J."/>
            <person name="Schwartz D.C."/>
            <person name="Cheng Z."/>
            <person name="Lindblad-Toh K."/>
            <person name="Eichler E.E."/>
            <person name="Ponting C.P."/>
        </authorList>
    </citation>
    <scope>NUCLEOTIDE SEQUENCE [LARGE SCALE GENOMIC DNA]</scope>
    <source>
        <strain>C57BL/6J</strain>
    </source>
</reference>
<proteinExistence type="inferred from homology"/>
<protein>
    <recommendedName>
        <fullName>POM121-like protein 2</fullName>
    </recommendedName>
</protein>
<sequence length="972" mass="103220">MGSYLGKAGSSPRSPAQGRADSGEKPASRRPARPLYQVHRVQHVHRAQPARRHRPARRPPNWDPANPTAFVSEAWRRFPMKRPQNPIMGSLPSDWWESYLKRNIWSLRHPRATWSPVTVKISPPERRPRPLFPVSRVVNSAGPSEEPPGPCGKDPVLRALLQCRKGRARWEEPLFPDTSDSQRHSASVWSAFKPLLKSGATVSFVARPGSLKRRPHVQSSDDKCKRSGCFSGALVASIHTQGPPSTKRNAITSSYSSSRELSGSWKRHFLRTLVQTPEWPLKKAGESPNSHLSVTPSSSGQLNGEIPLLQSGPRDLLTIPCQQGPVVTEEDPTLEGQAVPSNQTTEATTGTAGDSIPEMRAGIQPTLSLSRSSSERVLSTHVNPQLESLKNMPAPLGCSQLEHIQGISSDSNPSIASTQASPSSPTTPVTDSTWLSSIPRAHRSAVPPHSSVINPTAPTTQSTLVGVVSNPILHLPASVLPVETSSHLALRPIWGPVHSTEVRTASYSRISVMAEASSSSSPSTTPGILRPTFKPIFGSIEPLQTMSETAPVHTRQPSSSLSSDSTHLFHSLATTAPCVVTSVIPASKSKDPGVDLNIVTSTTGNSCSVPSCSTFLLGASQNFPSATDLIFPSQHPTIPTVHTVTIFSQVLTSAIKISPLRSTDTLKGVSNPLATLGLSSTNQPPVTSSNSNVTSALTSSLGSSPKPLLPPSQRNTSQSSPGAIDGLKQSSLQLAPAQSFSTSFLSENSGVSPTPSAQLVLSKTTQPACGQLTSSAPIIHTPATSQTGFGSTLAGFPFGKASSTALRVIRQNHQSVTYSSVFGSTAPRPFAFGGLVMPMDCGEPEVIVAAPKRSTSGTRQSMTPSTLAPFVQCWNQSMQGPPNQITPLAGIPARKIMSGAPSLVPFAQSIPVPGAIKAGSSLGFGMSSPTVQGSVGRNPLRSLEPSFCIGTKSKTLRNREPGRSRKHHTYKK</sequence>
<dbReference type="EMBL" id="AL606968">
    <property type="protein sequence ID" value="CAI24930.1"/>
    <property type="molecule type" value="Genomic_DNA"/>
</dbReference>
<dbReference type="EMBL" id="AL589879">
    <property type="protein sequence ID" value="CAI24930.1"/>
    <property type="status" value="JOINED"/>
    <property type="molecule type" value="Genomic_DNA"/>
</dbReference>
<dbReference type="EMBL" id="AL589879">
    <property type="protein sequence ID" value="CAI25473.1"/>
    <property type="molecule type" value="Genomic_DNA"/>
</dbReference>
<dbReference type="EMBL" id="AL606968">
    <property type="protein sequence ID" value="CAI25473.1"/>
    <property type="status" value="JOINED"/>
    <property type="molecule type" value="Genomic_DNA"/>
</dbReference>
<dbReference type="CCDS" id="CCDS49217.1"/>
<dbReference type="RefSeq" id="NP_001156400.1">
    <property type="nucleotide sequence ID" value="NM_001162928.1"/>
</dbReference>
<dbReference type="FunCoup" id="Q5SW25">
    <property type="interactions" value="117"/>
</dbReference>
<dbReference type="STRING" id="10090.ENSMUSP00000017126"/>
<dbReference type="GlyGen" id="Q5SW25">
    <property type="glycosylation" value="2 sites"/>
</dbReference>
<dbReference type="PhosphoSitePlus" id="Q5SW25"/>
<dbReference type="SwissPalm" id="Q5SW25"/>
<dbReference type="PaxDb" id="10090-ENSMUSP00000017126"/>
<dbReference type="ProteomicsDB" id="293940"/>
<dbReference type="Antibodypedia" id="49628">
    <property type="antibodies" value="8 antibodies from 7 providers"/>
</dbReference>
<dbReference type="Ensembl" id="ENSMUST00000017126.6">
    <property type="protein sequence ID" value="ENSMUSP00000017126.5"/>
    <property type="gene ID" value="ENSMUSG00000016982.7"/>
</dbReference>
<dbReference type="GeneID" id="195236"/>
<dbReference type="KEGG" id="mmu:195236"/>
<dbReference type="UCSC" id="uc011ywx.1">
    <property type="organism name" value="mouse"/>
</dbReference>
<dbReference type="AGR" id="MGI:2684870"/>
<dbReference type="CTD" id="94026"/>
<dbReference type="MGI" id="MGI:2684870">
    <property type="gene designation" value="Pom121l2"/>
</dbReference>
<dbReference type="VEuPathDB" id="HostDB:ENSMUSG00000016982"/>
<dbReference type="eggNOG" id="ENOG502RWWZ">
    <property type="taxonomic scope" value="Eukaryota"/>
</dbReference>
<dbReference type="GeneTree" id="ENSGT00940000153253"/>
<dbReference type="HOGENOM" id="CLU_011366_0_1_1"/>
<dbReference type="InParanoid" id="Q5SW25"/>
<dbReference type="OMA" id="TIWSLRH"/>
<dbReference type="OrthoDB" id="9629416at2759"/>
<dbReference type="PhylomeDB" id="Q5SW25"/>
<dbReference type="TreeFam" id="TF350673"/>
<dbReference type="BioGRID-ORCS" id="195236">
    <property type="hits" value="2 hits in 77 CRISPR screens"/>
</dbReference>
<dbReference type="ChiTaRS" id="Pom121l2">
    <property type="organism name" value="mouse"/>
</dbReference>
<dbReference type="PRO" id="PR:Q5SW25"/>
<dbReference type="Proteomes" id="UP000000589">
    <property type="component" value="Chromosome 13"/>
</dbReference>
<dbReference type="RNAct" id="Q5SW25">
    <property type="molecule type" value="protein"/>
</dbReference>
<dbReference type="Bgee" id="ENSMUSG00000016982">
    <property type="expression patterns" value="Expressed in seminiferous tubule of testis and 6 other cell types or tissues"/>
</dbReference>
<dbReference type="ExpressionAtlas" id="Q5SW25">
    <property type="expression patterns" value="baseline and differential"/>
</dbReference>
<dbReference type="InterPro" id="IPR026054">
    <property type="entry name" value="Nucleoporin"/>
</dbReference>
<dbReference type="PANTHER" id="PTHR23193">
    <property type="entry name" value="NUCLEAR PORE COMPLEX PROTEIN NUP"/>
    <property type="match status" value="1"/>
</dbReference>
<dbReference type="PANTHER" id="PTHR23193:SF20">
    <property type="entry name" value="POM121-LIKE PROTEIN 2"/>
    <property type="match status" value="1"/>
</dbReference>
<dbReference type="Pfam" id="PF15229">
    <property type="entry name" value="POM121"/>
    <property type="match status" value="1"/>
</dbReference>
<name>P12L2_MOUSE</name>
<evidence type="ECO:0000256" key="1">
    <source>
        <dbReference type="SAM" id="MobiDB-lite"/>
    </source>
</evidence>
<evidence type="ECO:0000305" key="2"/>